<name>RS6_SHESM</name>
<reference key="1">
    <citation type="submission" date="2006-08" db="EMBL/GenBank/DDBJ databases">
        <title>Complete sequence of Shewanella sp. MR-4.</title>
        <authorList>
            <consortium name="US DOE Joint Genome Institute"/>
            <person name="Copeland A."/>
            <person name="Lucas S."/>
            <person name="Lapidus A."/>
            <person name="Barry K."/>
            <person name="Detter J.C."/>
            <person name="Glavina del Rio T."/>
            <person name="Hammon N."/>
            <person name="Israni S."/>
            <person name="Dalin E."/>
            <person name="Tice H."/>
            <person name="Pitluck S."/>
            <person name="Kiss H."/>
            <person name="Brettin T."/>
            <person name="Bruce D."/>
            <person name="Han C."/>
            <person name="Tapia R."/>
            <person name="Gilna P."/>
            <person name="Schmutz J."/>
            <person name="Larimer F."/>
            <person name="Land M."/>
            <person name="Hauser L."/>
            <person name="Kyrpides N."/>
            <person name="Mikhailova N."/>
            <person name="Nealson K."/>
            <person name="Konstantinidis K."/>
            <person name="Klappenbach J."/>
            <person name="Tiedje J."/>
            <person name="Richardson P."/>
        </authorList>
    </citation>
    <scope>NUCLEOTIDE SEQUENCE [LARGE SCALE GENOMIC DNA]</scope>
    <source>
        <strain>MR-4</strain>
    </source>
</reference>
<keyword id="KW-0687">Ribonucleoprotein</keyword>
<keyword id="KW-0689">Ribosomal protein</keyword>
<keyword id="KW-0694">RNA-binding</keyword>
<keyword id="KW-0699">rRNA-binding</keyword>
<accession>Q0HF39</accession>
<evidence type="ECO:0000255" key="1">
    <source>
        <dbReference type="HAMAP-Rule" id="MF_00360"/>
    </source>
</evidence>
<evidence type="ECO:0000256" key="2">
    <source>
        <dbReference type="SAM" id="MobiDB-lite"/>
    </source>
</evidence>
<evidence type="ECO:0000305" key="3"/>
<feature type="chain" id="PRO_1000005351" description="Small ribosomal subunit protein bS6">
    <location>
        <begin position="1"/>
        <end position="131"/>
    </location>
</feature>
<feature type="region of interest" description="Disordered" evidence="2">
    <location>
        <begin position="96"/>
        <end position="131"/>
    </location>
</feature>
<feature type="compositionally biased region" description="Basic and acidic residues" evidence="2">
    <location>
        <begin position="104"/>
        <end position="122"/>
    </location>
</feature>
<organism>
    <name type="scientific">Shewanella sp. (strain MR-4)</name>
    <dbReference type="NCBI Taxonomy" id="60480"/>
    <lineage>
        <taxon>Bacteria</taxon>
        <taxon>Pseudomonadati</taxon>
        <taxon>Pseudomonadota</taxon>
        <taxon>Gammaproteobacteria</taxon>
        <taxon>Alteromonadales</taxon>
        <taxon>Shewanellaceae</taxon>
        <taxon>Shewanella</taxon>
    </lineage>
</organism>
<comment type="function">
    <text evidence="1">Binds together with bS18 to 16S ribosomal RNA.</text>
</comment>
<comment type="similarity">
    <text evidence="1">Belongs to the bacterial ribosomal protein bS6 family.</text>
</comment>
<protein>
    <recommendedName>
        <fullName evidence="1">Small ribosomal subunit protein bS6</fullName>
    </recommendedName>
    <alternativeName>
        <fullName evidence="3">30S ribosomal protein S6</fullName>
    </alternativeName>
</protein>
<gene>
    <name evidence="1" type="primary">rpsF</name>
    <name type="ordered locus">Shewmr4_3260</name>
</gene>
<dbReference type="EMBL" id="CP000446">
    <property type="protein sequence ID" value="ABI40328.1"/>
    <property type="molecule type" value="Genomic_DNA"/>
</dbReference>
<dbReference type="RefSeq" id="WP_011623998.1">
    <property type="nucleotide sequence ID" value="NC_008321.1"/>
</dbReference>
<dbReference type="SMR" id="Q0HF39"/>
<dbReference type="GeneID" id="75187374"/>
<dbReference type="KEGG" id="she:Shewmr4_3260"/>
<dbReference type="HOGENOM" id="CLU_113441_6_1_6"/>
<dbReference type="GO" id="GO:0022627">
    <property type="term" value="C:cytosolic small ribosomal subunit"/>
    <property type="evidence" value="ECO:0007669"/>
    <property type="project" value="TreeGrafter"/>
</dbReference>
<dbReference type="GO" id="GO:0070181">
    <property type="term" value="F:small ribosomal subunit rRNA binding"/>
    <property type="evidence" value="ECO:0007669"/>
    <property type="project" value="TreeGrafter"/>
</dbReference>
<dbReference type="GO" id="GO:0003735">
    <property type="term" value="F:structural constituent of ribosome"/>
    <property type="evidence" value="ECO:0007669"/>
    <property type="project" value="InterPro"/>
</dbReference>
<dbReference type="GO" id="GO:0006412">
    <property type="term" value="P:translation"/>
    <property type="evidence" value="ECO:0007669"/>
    <property type="project" value="UniProtKB-UniRule"/>
</dbReference>
<dbReference type="CDD" id="cd00473">
    <property type="entry name" value="bS6"/>
    <property type="match status" value="1"/>
</dbReference>
<dbReference type="FunFam" id="3.30.70.60:FF:000003">
    <property type="entry name" value="30S ribosomal protein S6"/>
    <property type="match status" value="1"/>
</dbReference>
<dbReference type="Gene3D" id="3.30.70.60">
    <property type="match status" value="1"/>
</dbReference>
<dbReference type="HAMAP" id="MF_00360">
    <property type="entry name" value="Ribosomal_bS6"/>
    <property type="match status" value="1"/>
</dbReference>
<dbReference type="InterPro" id="IPR000529">
    <property type="entry name" value="Ribosomal_bS6"/>
</dbReference>
<dbReference type="InterPro" id="IPR035980">
    <property type="entry name" value="Ribosomal_bS6_sf"/>
</dbReference>
<dbReference type="InterPro" id="IPR020814">
    <property type="entry name" value="Ribosomal_S6_plastid/chlpt"/>
</dbReference>
<dbReference type="InterPro" id="IPR014717">
    <property type="entry name" value="Transl_elong_EF1B/ribsomal_bS6"/>
</dbReference>
<dbReference type="NCBIfam" id="TIGR00166">
    <property type="entry name" value="S6"/>
    <property type="match status" value="1"/>
</dbReference>
<dbReference type="PANTHER" id="PTHR21011">
    <property type="entry name" value="MITOCHONDRIAL 28S RIBOSOMAL PROTEIN S6"/>
    <property type="match status" value="1"/>
</dbReference>
<dbReference type="PANTHER" id="PTHR21011:SF1">
    <property type="entry name" value="SMALL RIBOSOMAL SUBUNIT PROTEIN BS6M"/>
    <property type="match status" value="1"/>
</dbReference>
<dbReference type="Pfam" id="PF01250">
    <property type="entry name" value="Ribosomal_S6"/>
    <property type="match status" value="1"/>
</dbReference>
<dbReference type="SUPFAM" id="SSF54995">
    <property type="entry name" value="Ribosomal protein S6"/>
    <property type="match status" value="1"/>
</dbReference>
<proteinExistence type="inferred from homology"/>
<sequence length="131" mass="15059">MRHYEIVFMVHPDQSEQVPGMIERYTGVITEANGKIHRLEDWGRRQLAYPIQDLHKAHYVLMNVEAPAETIEELETAFRFNDAVLRNMVMRTKVAVTEASPMAKAKDERDSRRGPAGDRSYDEANAEEIAE</sequence>